<feature type="chain" id="PRO_0000217509" description="Uncharacterized 16.5 kDa protein in psaC-atpA intergenic region">
    <location>
        <begin position="1"/>
        <end position="138"/>
    </location>
</feature>
<sequence>MENATVPNDQNEDYIDLTKPMSKSYWKKMKVKGFYRWVLVRDFKKINDILNTNEIVPILVSGAKTFTKSRFSAMRWSLNEFAFVDGFFFLLLFFFYKKKKRSKISNTSKRKKRTKKKRTRNLGNLCFLRKNLASILFF</sequence>
<geneLocation type="chloroplast"/>
<comment type="subcellular location">
    <subcellularLocation>
        <location>Plastid</location>
        <location>Chloroplast</location>
    </subcellularLocation>
</comment>
<protein>
    <recommendedName>
        <fullName>Uncharacterized 16.5 kDa protein in psaC-atpA intergenic region</fullName>
    </recommendedName>
    <alternativeName>
        <fullName>ORF138</fullName>
    </alternativeName>
</protein>
<accession>O20118</accession>
<reference key="1">
    <citation type="journal article" date="1997" name="Proc. Natl. Acad. Sci. U.S.A.">
        <title>Complete nucleotide sequence of the chloroplast genome from the green alga Chlorella vulgaris: the existence of genes possibly involved in chloroplast division.</title>
        <authorList>
            <person name="Wakasugi T."/>
            <person name="Nagai T."/>
            <person name="Kapoor M."/>
            <person name="Sugita M."/>
            <person name="Ito M."/>
            <person name="Ito S."/>
            <person name="Tsudzuki J."/>
            <person name="Nakashima K."/>
            <person name="Tsudzuki T."/>
            <person name="Suzuki Y."/>
            <person name="Hamada A."/>
            <person name="Ohta T."/>
            <person name="Inamura A."/>
            <person name="Yoshinaga K."/>
            <person name="Sugiura M."/>
        </authorList>
    </citation>
    <scope>NUCLEOTIDE SEQUENCE [LARGE SCALE GENOMIC DNA]</scope>
    <source>
        <strain>IAM C-27 / Tamiya</strain>
    </source>
</reference>
<dbReference type="EMBL" id="AB001684">
    <property type="protein sequence ID" value="BAA57850.1"/>
    <property type="molecule type" value="Genomic_DNA"/>
</dbReference>
<dbReference type="PIR" id="T07203">
    <property type="entry name" value="T07203"/>
</dbReference>
<dbReference type="RefSeq" id="NP_045775.1">
    <property type="nucleotide sequence ID" value="NC_001865.1"/>
</dbReference>
<dbReference type="SMR" id="O20118"/>
<dbReference type="GeneID" id="1457397"/>
<dbReference type="GO" id="GO:0009507">
    <property type="term" value="C:chloroplast"/>
    <property type="evidence" value="ECO:0007669"/>
    <property type="project" value="UniProtKB-SubCell"/>
</dbReference>
<name>YCX1_CHLVU</name>
<organism>
    <name type="scientific">Chlorella vulgaris</name>
    <name type="common">Green alga</name>
    <dbReference type="NCBI Taxonomy" id="3077"/>
    <lineage>
        <taxon>Eukaryota</taxon>
        <taxon>Viridiplantae</taxon>
        <taxon>Chlorophyta</taxon>
        <taxon>core chlorophytes</taxon>
        <taxon>Trebouxiophyceae</taxon>
        <taxon>Chlorellales</taxon>
        <taxon>Chlorellaceae</taxon>
        <taxon>Chlorella clade</taxon>
        <taxon>Chlorella</taxon>
    </lineage>
</organism>
<keyword id="KW-0150">Chloroplast</keyword>
<keyword id="KW-0934">Plastid</keyword>
<proteinExistence type="predicted"/>